<dbReference type="EMBL" id="DQ991395">
    <property type="protein sequence ID" value="ABL84738.1"/>
    <property type="molecule type" value="Genomic_DNA"/>
</dbReference>
<dbReference type="EMBL" id="DQ278874">
    <property type="protein sequence ID" value="ABB97472.1"/>
    <property type="molecule type" value="Genomic_DNA"/>
</dbReference>
<dbReference type="EMBL" id="DQ365929">
    <property type="protein sequence ID" value="ABC94953.1"/>
    <property type="molecule type" value="mRNA"/>
</dbReference>
<dbReference type="RefSeq" id="NP_001038079.1">
    <property type="nucleotide sequence ID" value="NM_001044614.2"/>
</dbReference>
<dbReference type="SMR" id="Q2HY40"/>
<dbReference type="FunCoup" id="Q2HY40">
    <property type="interactions" value="144"/>
</dbReference>
<dbReference type="STRING" id="9823.ENSSSCP00000035217"/>
<dbReference type="PaxDb" id="9823-ENSSSCP00000007124"/>
<dbReference type="PeptideAtlas" id="Q2HY40"/>
<dbReference type="Ensembl" id="ENSSSCT00000055984.3">
    <property type="protein sequence ID" value="ENSSSCP00000035217.1"/>
    <property type="gene ID" value="ENSSSCG00000031262.3"/>
</dbReference>
<dbReference type="Ensembl" id="ENSSSCT00015048815.1">
    <property type="protein sequence ID" value="ENSSSCP00015019435.1"/>
    <property type="gene ID" value="ENSSSCG00015036534.1"/>
</dbReference>
<dbReference type="Ensembl" id="ENSSSCT00025096449.1">
    <property type="protein sequence ID" value="ENSSSCP00025042339.1"/>
    <property type="gene ID" value="ENSSSCG00025069926.1"/>
</dbReference>
<dbReference type="Ensembl" id="ENSSSCT00030097657.1">
    <property type="protein sequence ID" value="ENSSSCP00030044985.1"/>
    <property type="gene ID" value="ENSSSCG00030069782.1"/>
</dbReference>
<dbReference type="Ensembl" id="ENSSSCT00035093696.1">
    <property type="protein sequence ID" value="ENSSSCP00035039327.1"/>
    <property type="gene ID" value="ENSSSCG00035069373.1"/>
</dbReference>
<dbReference type="Ensembl" id="ENSSSCT00040067050.1">
    <property type="protein sequence ID" value="ENSSSCP00040028462.1"/>
    <property type="gene ID" value="ENSSSCG00040049344.1"/>
</dbReference>
<dbReference type="Ensembl" id="ENSSSCT00045054397.1">
    <property type="protein sequence ID" value="ENSSSCP00045037875.1"/>
    <property type="gene ID" value="ENSSSCG00045031705.1"/>
</dbReference>
<dbReference type="Ensembl" id="ENSSSCT00050101744.1">
    <property type="protein sequence ID" value="ENSSSCP00050044295.1"/>
    <property type="gene ID" value="ENSSSCG00050074320.1"/>
</dbReference>
<dbReference type="Ensembl" id="ENSSSCT00055053979.1">
    <property type="protein sequence ID" value="ENSSSCP00055043074.1"/>
    <property type="gene ID" value="ENSSSCG00055027208.1"/>
</dbReference>
<dbReference type="Ensembl" id="ENSSSCT00060031550.1">
    <property type="protein sequence ID" value="ENSSSCP00060013521.1"/>
    <property type="gene ID" value="ENSSSCG00060023252.1"/>
</dbReference>
<dbReference type="Ensembl" id="ENSSSCT00065000529.1">
    <property type="protein sequence ID" value="ENSSSCP00065000095.1"/>
    <property type="gene ID" value="ENSSSCG00065000466.1"/>
</dbReference>
<dbReference type="Ensembl" id="ENSSSCT00070002822.1">
    <property type="protein sequence ID" value="ENSSSCP00070002327.1"/>
    <property type="gene ID" value="ENSSSCG00070001501.1"/>
</dbReference>
<dbReference type="Ensembl" id="ENSSSCT00085044909">
    <property type="protein sequence ID" value="ENSSSCP00085031363"/>
    <property type="gene ID" value="ENSSSCG00085023408"/>
</dbReference>
<dbReference type="Ensembl" id="ENSSSCT00090026434">
    <property type="protein sequence ID" value="ENSSSCP00090016252"/>
    <property type="gene ID" value="ENSSSCG00090015061"/>
</dbReference>
<dbReference type="Ensembl" id="ENSSSCT00105000398">
    <property type="protein sequence ID" value="ENSSSCP00105000246"/>
    <property type="gene ID" value="ENSSSCG00105000230"/>
</dbReference>
<dbReference type="Ensembl" id="ENSSSCT00110046599">
    <property type="protein sequence ID" value="ENSSSCP00110032762"/>
    <property type="gene ID" value="ENSSSCG00110024117"/>
</dbReference>
<dbReference type="Ensembl" id="ENSSSCT00115010077">
    <property type="protein sequence ID" value="ENSSSCP00115009488"/>
    <property type="gene ID" value="ENSSSCG00115005803"/>
</dbReference>
<dbReference type="Ensembl" id="ENSSSCT00130060202">
    <property type="protein sequence ID" value="ENSSSCP00130043156"/>
    <property type="gene ID" value="ENSSSCG00130030811"/>
</dbReference>
<dbReference type="GeneID" id="733688"/>
<dbReference type="KEGG" id="ssc:733688"/>
<dbReference type="CTD" id="10628"/>
<dbReference type="VGNC" id="VGNC:94610">
    <property type="gene designation" value="TXNIP"/>
</dbReference>
<dbReference type="eggNOG" id="KOG3780">
    <property type="taxonomic scope" value="Eukaryota"/>
</dbReference>
<dbReference type="GeneTree" id="ENSGT00940000158522"/>
<dbReference type="HOGENOM" id="CLU_039221_1_1_1"/>
<dbReference type="InParanoid" id="Q2HY40"/>
<dbReference type="OMA" id="TKKYFEV"/>
<dbReference type="OrthoDB" id="2333384at2759"/>
<dbReference type="TreeFam" id="TF313650"/>
<dbReference type="Reactome" id="R-SSC-844456">
    <property type="pathway name" value="The NLRP3 inflammasome"/>
</dbReference>
<dbReference type="Proteomes" id="UP000008227">
    <property type="component" value="Chromosome 4"/>
</dbReference>
<dbReference type="Proteomes" id="UP000314985">
    <property type="component" value="Chromosome 4"/>
</dbReference>
<dbReference type="Proteomes" id="UP000694570">
    <property type="component" value="Unplaced"/>
</dbReference>
<dbReference type="Proteomes" id="UP000694571">
    <property type="component" value="Unplaced"/>
</dbReference>
<dbReference type="Proteomes" id="UP000694720">
    <property type="component" value="Unplaced"/>
</dbReference>
<dbReference type="Proteomes" id="UP000694722">
    <property type="component" value="Unplaced"/>
</dbReference>
<dbReference type="Proteomes" id="UP000694723">
    <property type="component" value="Unplaced"/>
</dbReference>
<dbReference type="Proteomes" id="UP000694724">
    <property type="component" value="Unplaced"/>
</dbReference>
<dbReference type="Proteomes" id="UP000694725">
    <property type="component" value="Unplaced"/>
</dbReference>
<dbReference type="Proteomes" id="UP000694726">
    <property type="component" value="Unplaced"/>
</dbReference>
<dbReference type="Proteomes" id="UP000694727">
    <property type="component" value="Unplaced"/>
</dbReference>
<dbReference type="Proteomes" id="UP000694728">
    <property type="component" value="Unplaced"/>
</dbReference>
<dbReference type="Bgee" id="ENSSSCG00000031262">
    <property type="expression patterns" value="Expressed in subcutaneous adipose tissue and 43 other cell types or tissues"/>
</dbReference>
<dbReference type="ExpressionAtlas" id="Q2HY40">
    <property type="expression patterns" value="baseline and differential"/>
</dbReference>
<dbReference type="GO" id="GO:0005737">
    <property type="term" value="C:cytoplasm"/>
    <property type="evidence" value="ECO:0000318"/>
    <property type="project" value="GO_Central"/>
</dbReference>
<dbReference type="GO" id="GO:0004857">
    <property type="term" value="F:enzyme inhibitor activity"/>
    <property type="evidence" value="ECO:0007669"/>
    <property type="project" value="Ensembl"/>
</dbReference>
<dbReference type="GO" id="GO:0031625">
    <property type="term" value="F:ubiquitin protein ligase binding"/>
    <property type="evidence" value="ECO:0000318"/>
    <property type="project" value="GO_Central"/>
</dbReference>
<dbReference type="GO" id="GO:0071228">
    <property type="term" value="P:cellular response to tumor cell"/>
    <property type="evidence" value="ECO:0000250"/>
    <property type="project" value="UniProtKB"/>
</dbReference>
<dbReference type="GO" id="GO:0030216">
    <property type="term" value="P:keratinocyte differentiation"/>
    <property type="evidence" value="ECO:0007669"/>
    <property type="project" value="Ensembl"/>
</dbReference>
<dbReference type="GO" id="GO:0051782">
    <property type="term" value="P:negative regulation of cell division"/>
    <property type="evidence" value="ECO:0000250"/>
    <property type="project" value="UniProtKB"/>
</dbReference>
<dbReference type="GO" id="GO:0000122">
    <property type="term" value="P:negative regulation of transcription by RNA polymerase II"/>
    <property type="evidence" value="ECO:0007669"/>
    <property type="project" value="Ensembl"/>
</dbReference>
<dbReference type="GO" id="GO:0048008">
    <property type="term" value="P:platelet-derived growth factor receptor signaling pathway"/>
    <property type="evidence" value="ECO:0007669"/>
    <property type="project" value="Ensembl"/>
</dbReference>
<dbReference type="GO" id="GO:0006606">
    <property type="term" value="P:protein import into nucleus"/>
    <property type="evidence" value="ECO:0007669"/>
    <property type="project" value="Ensembl"/>
</dbReference>
<dbReference type="GO" id="GO:0015031">
    <property type="term" value="P:protein transport"/>
    <property type="evidence" value="ECO:0000318"/>
    <property type="project" value="GO_Central"/>
</dbReference>
<dbReference type="GO" id="GO:0006979">
    <property type="term" value="P:response to oxidative stress"/>
    <property type="evidence" value="ECO:0007669"/>
    <property type="project" value="Ensembl"/>
</dbReference>
<dbReference type="FunFam" id="2.60.40.640:FF:000016">
    <property type="entry name" value="thioredoxin-interacting protein-like"/>
    <property type="match status" value="1"/>
</dbReference>
<dbReference type="FunFam" id="2.60.40.640:FF:000017">
    <property type="entry name" value="thioredoxin-interacting protein-like"/>
    <property type="match status" value="1"/>
</dbReference>
<dbReference type="Gene3D" id="2.60.40.640">
    <property type="match status" value="2"/>
</dbReference>
<dbReference type="InterPro" id="IPR014752">
    <property type="entry name" value="Arrestin-like_C"/>
</dbReference>
<dbReference type="InterPro" id="IPR011021">
    <property type="entry name" value="Arrestin-like_N"/>
</dbReference>
<dbReference type="InterPro" id="IPR011022">
    <property type="entry name" value="Arrestin_C-like"/>
</dbReference>
<dbReference type="InterPro" id="IPR050357">
    <property type="entry name" value="Arrestin_domain-protein"/>
</dbReference>
<dbReference type="InterPro" id="IPR014756">
    <property type="entry name" value="Ig_E-set"/>
</dbReference>
<dbReference type="PANTHER" id="PTHR11188">
    <property type="entry name" value="ARRESTIN DOMAIN CONTAINING PROTEIN"/>
    <property type="match status" value="1"/>
</dbReference>
<dbReference type="PANTHER" id="PTHR11188:SF14">
    <property type="entry name" value="THIOREDOXIN-INTERACTING PROTEIN"/>
    <property type="match status" value="1"/>
</dbReference>
<dbReference type="Pfam" id="PF02752">
    <property type="entry name" value="Arrestin_C"/>
    <property type="match status" value="1"/>
</dbReference>
<dbReference type="Pfam" id="PF00339">
    <property type="entry name" value="Arrestin_N"/>
    <property type="match status" value="1"/>
</dbReference>
<dbReference type="SMART" id="SM01017">
    <property type="entry name" value="Arrestin_C"/>
    <property type="match status" value="1"/>
</dbReference>
<dbReference type="SUPFAM" id="SSF81296">
    <property type="entry name" value="E set domains"/>
    <property type="match status" value="2"/>
</dbReference>
<sequence length="391" mass="43811">MVMFKKIKSFEVVFNDPEKVYGCGEKVAGRVIVEVCEVTRIKAVRILACGVAKVLWMQGSQQCKQTLDYLRYEDTLLLDDHPTGENEMVIMRPGNKYEYKFGFELPQGPLGTSFKGKYGCVDYWVKAFLDRPSQPTQETKKHFEVMDLVDVNTPDLMAPVSAKKEKKVSCMFIPDGRVSVSARIDRKGFCEGDEINIHADFENTCSRIVVPKAAIVARHTYLANGQTKVLTQKLSSVRGNHIISGTCASWRGKSLRVQKIRPSILGCNILRVEYFLLIYVSVPGSKKVILDLPLVIGSRSGLSSRTSSMASRTSSEMSWVDLNIPDTPEAPPCYMDIIPEDHRLESPTTPLLDDTDGSQDSPIFMYAPEFKFMPPPTYSEVDPCILNNNVQ</sequence>
<accession>Q2HY40</accession>
<accession>A5J2A7</accession>
<accession>Q09W51</accession>
<comment type="function">
    <text evidence="1 2">May act as an oxidative stress mediator by inhibiting thioredoxin activity or by limiting its bioavailability (By similarity). Interacts with COPS5 and restores COPS5-induced suppression of CDKN1B stability, blocking the COPS5-mediated translocation of CDKN1B from the nucleus to the cytoplasm (By similarity). Functions as a transcriptional repressor, possibly by acting as a bridge molecule between transcription factors and corepressor complexes, and over-expression will induce G0/G1 cell cycle arrest (By similarity). Required for the maturation of natural killer cells (By similarity). Acts as a suppressor of tumor cell growth. Inhibits the proteasomal degradation of DDIT4, and thereby contributes to the inhibition of the mammalian target of rapamycin complex 1 (mTORC1) (By similarity).</text>
</comment>
<comment type="subunit">
    <text evidence="2">Homodimer; disulfide-linked. Interacts with TXN/thioredoxin through its redox-active site. Interacts with transcriptional repressors ZBTB16, ZBTB32 and HDAC1. Interacts with DDIT4.</text>
</comment>
<comment type="subcellular location">
    <subcellularLocation>
        <location evidence="1">Cytoplasm</location>
    </subcellularLocation>
</comment>
<comment type="PTM">
    <text evidence="2">Ubiquitinated; undergoes heterotypic 'Lys-48'-/'Lys-63'-branched polyubiquitination catalyzed by ITCH and UBR5 resulting in proteasomal degradation. Deubiquitinated by USP5, leading to TXNIP stabilization.</text>
</comment>
<comment type="similarity">
    <text evidence="3">Belongs to the arrestin family.</text>
</comment>
<reference key="1">
    <citation type="journal article" date="2007" name="Mamm. Genome">
        <title>Investigation of TXNIP (thioredoxin-interacting protein) and TRX (thioredoxin) genes for growth-related traits in pigs.</title>
        <authorList>
            <person name="Yu M."/>
            <person name="Geiger B."/>
            <person name="Deeb N."/>
            <person name="Rothschild M.F."/>
        </authorList>
    </citation>
    <scope>NUCLEOTIDE SEQUENCE [GENOMIC DNA]</scope>
</reference>
<reference key="2">
    <citation type="submission" date="2005-11" db="EMBL/GenBank/DDBJ databases">
        <title>Polymorphism and association with production traits of porcine TXNIP gene.</title>
        <authorList>
            <person name="Xu D.Q."/>
            <person name="Ling X.F."/>
            <person name="Xiong Y.Z."/>
        </authorList>
    </citation>
    <scope>NUCLEOTIDE SEQUENCE [GENOMIC DNA]</scope>
</reference>
<reference key="3">
    <citation type="submission" date="2006-01" db="EMBL/GenBank/DDBJ databases">
        <title>Molecular cloning and characterization of porcine TXNIP.</title>
        <authorList>
            <person name="Xu D.Q."/>
            <person name="Xiong Y.Z."/>
        </authorList>
    </citation>
    <scope>NUCLEOTIDE SEQUENCE [MRNA]</scope>
    <source>
        <tissue>Skeletal muscle</tissue>
    </source>
</reference>
<evidence type="ECO:0000250" key="1">
    <source>
        <dbReference type="UniProtKB" id="Q8BG60"/>
    </source>
</evidence>
<evidence type="ECO:0000250" key="2">
    <source>
        <dbReference type="UniProtKB" id="Q9H3M7"/>
    </source>
</evidence>
<evidence type="ECO:0000305" key="3"/>
<gene>
    <name type="primary">TXNIP</name>
</gene>
<feature type="chain" id="PRO_0000250491" description="Thioredoxin-interacting protein">
    <location>
        <begin position="1"/>
        <end position="391"/>
    </location>
</feature>
<feature type="modified residue" description="Phosphoserine" evidence="2">
    <location>
        <position position="361"/>
    </location>
</feature>
<feature type="disulfide bond" description="Interchain" evidence="2">
    <location>
        <position position="63"/>
    </location>
</feature>
<feature type="cross-link" description="Glycyl lysine isopeptide (Lys-Gly) (interchain with G-Cter in ubiquitin)" evidence="2">
    <location>
        <position position="212"/>
    </location>
</feature>
<protein>
    <recommendedName>
        <fullName>Thioredoxin-interacting protein</fullName>
    </recommendedName>
</protein>
<organism>
    <name type="scientific">Sus scrofa</name>
    <name type="common">Pig</name>
    <dbReference type="NCBI Taxonomy" id="9823"/>
    <lineage>
        <taxon>Eukaryota</taxon>
        <taxon>Metazoa</taxon>
        <taxon>Chordata</taxon>
        <taxon>Craniata</taxon>
        <taxon>Vertebrata</taxon>
        <taxon>Euteleostomi</taxon>
        <taxon>Mammalia</taxon>
        <taxon>Eutheria</taxon>
        <taxon>Laurasiatheria</taxon>
        <taxon>Artiodactyla</taxon>
        <taxon>Suina</taxon>
        <taxon>Suidae</taxon>
        <taxon>Sus</taxon>
    </lineage>
</organism>
<name>TXNIP_PIG</name>
<proteinExistence type="evidence at transcript level"/>
<keyword id="KW-0131">Cell cycle</keyword>
<keyword id="KW-0963">Cytoplasm</keyword>
<keyword id="KW-1015">Disulfide bond</keyword>
<keyword id="KW-1017">Isopeptide bond</keyword>
<keyword id="KW-0597">Phosphoprotein</keyword>
<keyword id="KW-1185">Reference proteome</keyword>
<keyword id="KW-0804">Transcription</keyword>
<keyword id="KW-0805">Transcription regulation</keyword>
<keyword id="KW-0043">Tumor suppressor</keyword>
<keyword id="KW-0832">Ubl conjugation</keyword>